<sequence length="203" mass="23123">MSRYTGPSWKQSRRLGLSLTGTGKELARRNYVPGQHGPNNRSKLSEYGLQLAEKQKLRFSYGLGEKQFRNLFVQATKIKEGTLGFNFMVLLERRLDNVVYRLGLATTRRQARQFVNHGHILVDGKRVDIPSYRVDPGQVISVREKSMKVPAILEAVEATLGRPAFVSFDAEKLEGSLTRLPERDEINPEINEALVVEFYNKML</sequence>
<feature type="chain" id="PRO_0000228929" description="Small ribosomal subunit protein uS4">
    <location>
        <begin position="1"/>
        <end position="203"/>
    </location>
</feature>
<feature type="domain" description="S4 RNA-binding" evidence="1">
    <location>
        <begin position="93"/>
        <end position="156"/>
    </location>
</feature>
<gene>
    <name evidence="1" type="primary">rpsD</name>
    <name type="ordered locus">M28_Spy1865</name>
</gene>
<proteinExistence type="inferred from homology"/>
<keyword id="KW-0687">Ribonucleoprotein</keyword>
<keyword id="KW-0689">Ribosomal protein</keyword>
<keyword id="KW-0694">RNA-binding</keyword>
<keyword id="KW-0699">rRNA-binding</keyword>
<evidence type="ECO:0000255" key="1">
    <source>
        <dbReference type="HAMAP-Rule" id="MF_01306"/>
    </source>
</evidence>
<evidence type="ECO:0000305" key="2"/>
<organism>
    <name type="scientific">Streptococcus pyogenes serotype M28 (strain MGAS6180)</name>
    <dbReference type="NCBI Taxonomy" id="319701"/>
    <lineage>
        <taxon>Bacteria</taxon>
        <taxon>Bacillati</taxon>
        <taxon>Bacillota</taxon>
        <taxon>Bacilli</taxon>
        <taxon>Lactobacillales</taxon>
        <taxon>Streptococcaceae</taxon>
        <taxon>Streptococcus</taxon>
    </lineage>
</organism>
<dbReference type="EMBL" id="CP000056">
    <property type="protein sequence ID" value="AAX72975.1"/>
    <property type="molecule type" value="Genomic_DNA"/>
</dbReference>
<dbReference type="RefSeq" id="WP_002982092.1">
    <property type="nucleotide sequence ID" value="NC_007296.2"/>
</dbReference>
<dbReference type="SMR" id="Q48QN5"/>
<dbReference type="GeneID" id="69901600"/>
<dbReference type="KEGG" id="spb:M28_Spy1865"/>
<dbReference type="HOGENOM" id="CLU_092403_0_1_9"/>
<dbReference type="GO" id="GO:0015935">
    <property type="term" value="C:small ribosomal subunit"/>
    <property type="evidence" value="ECO:0007669"/>
    <property type="project" value="InterPro"/>
</dbReference>
<dbReference type="GO" id="GO:0019843">
    <property type="term" value="F:rRNA binding"/>
    <property type="evidence" value="ECO:0007669"/>
    <property type="project" value="UniProtKB-UniRule"/>
</dbReference>
<dbReference type="GO" id="GO:0003735">
    <property type="term" value="F:structural constituent of ribosome"/>
    <property type="evidence" value="ECO:0007669"/>
    <property type="project" value="InterPro"/>
</dbReference>
<dbReference type="GO" id="GO:0042274">
    <property type="term" value="P:ribosomal small subunit biogenesis"/>
    <property type="evidence" value="ECO:0007669"/>
    <property type="project" value="TreeGrafter"/>
</dbReference>
<dbReference type="GO" id="GO:0006412">
    <property type="term" value="P:translation"/>
    <property type="evidence" value="ECO:0007669"/>
    <property type="project" value="UniProtKB-UniRule"/>
</dbReference>
<dbReference type="CDD" id="cd00165">
    <property type="entry name" value="S4"/>
    <property type="match status" value="1"/>
</dbReference>
<dbReference type="FunFam" id="1.10.1050.10:FF:000001">
    <property type="entry name" value="30S ribosomal protein S4"/>
    <property type="match status" value="1"/>
</dbReference>
<dbReference type="FunFam" id="3.10.290.10:FF:000001">
    <property type="entry name" value="30S ribosomal protein S4"/>
    <property type="match status" value="1"/>
</dbReference>
<dbReference type="Gene3D" id="1.10.1050.10">
    <property type="entry name" value="Ribosomal Protein S4 Delta 41, Chain A, domain 1"/>
    <property type="match status" value="1"/>
</dbReference>
<dbReference type="Gene3D" id="3.10.290.10">
    <property type="entry name" value="RNA-binding S4 domain"/>
    <property type="match status" value="1"/>
</dbReference>
<dbReference type="HAMAP" id="MF_01306_B">
    <property type="entry name" value="Ribosomal_uS4_B"/>
    <property type="match status" value="1"/>
</dbReference>
<dbReference type="InterPro" id="IPR022801">
    <property type="entry name" value="Ribosomal_uS4"/>
</dbReference>
<dbReference type="InterPro" id="IPR005709">
    <property type="entry name" value="Ribosomal_uS4_bac-type"/>
</dbReference>
<dbReference type="InterPro" id="IPR018079">
    <property type="entry name" value="Ribosomal_uS4_CS"/>
</dbReference>
<dbReference type="InterPro" id="IPR001912">
    <property type="entry name" value="Ribosomal_uS4_N"/>
</dbReference>
<dbReference type="InterPro" id="IPR002942">
    <property type="entry name" value="S4_RNA-bd"/>
</dbReference>
<dbReference type="InterPro" id="IPR036986">
    <property type="entry name" value="S4_RNA-bd_sf"/>
</dbReference>
<dbReference type="NCBIfam" id="NF003717">
    <property type="entry name" value="PRK05327.1"/>
    <property type="match status" value="1"/>
</dbReference>
<dbReference type="NCBIfam" id="TIGR01017">
    <property type="entry name" value="rpsD_bact"/>
    <property type="match status" value="1"/>
</dbReference>
<dbReference type="PANTHER" id="PTHR11831">
    <property type="entry name" value="30S 40S RIBOSOMAL PROTEIN"/>
    <property type="match status" value="1"/>
</dbReference>
<dbReference type="PANTHER" id="PTHR11831:SF4">
    <property type="entry name" value="SMALL RIBOSOMAL SUBUNIT PROTEIN US4M"/>
    <property type="match status" value="1"/>
</dbReference>
<dbReference type="Pfam" id="PF00163">
    <property type="entry name" value="Ribosomal_S4"/>
    <property type="match status" value="1"/>
</dbReference>
<dbReference type="Pfam" id="PF01479">
    <property type="entry name" value="S4"/>
    <property type="match status" value="1"/>
</dbReference>
<dbReference type="SMART" id="SM01390">
    <property type="entry name" value="Ribosomal_S4"/>
    <property type="match status" value="1"/>
</dbReference>
<dbReference type="SMART" id="SM00363">
    <property type="entry name" value="S4"/>
    <property type="match status" value="1"/>
</dbReference>
<dbReference type="SUPFAM" id="SSF55174">
    <property type="entry name" value="Alpha-L RNA-binding motif"/>
    <property type="match status" value="1"/>
</dbReference>
<dbReference type="PROSITE" id="PS00632">
    <property type="entry name" value="RIBOSOMAL_S4"/>
    <property type="match status" value="1"/>
</dbReference>
<dbReference type="PROSITE" id="PS50889">
    <property type="entry name" value="S4"/>
    <property type="match status" value="1"/>
</dbReference>
<reference key="1">
    <citation type="journal article" date="2005" name="J. Infect. Dis.">
        <title>Genome sequence of a serotype M28 strain of group A Streptococcus: potential new insights into puerperal sepsis and bacterial disease specificity.</title>
        <authorList>
            <person name="Green N.M."/>
            <person name="Zhang S."/>
            <person name="Porcella S.F."/>
            <person name="Nagiec M.J."/>
            <person name="Barbian K.D."/>
            <person name="Beres S.B."/>
            <person name="Lefebvre R.B."/>
            <person name="Musser J.M."/>
        </authorList>
    </citation>
    <scope>NUCLEOTIDE SEQUENCE [LARGE SCALE GENOMIC DNA]</scope>
    <source>
        <strain>MGAS6180</strain>
    </source>
</reference>
<comment type="function">
    <text evidence="1">One of the primary rRNA binding proteins, it binds directly to 16S rRNA where it nucleates assembly of the body of the 30S subunit.</text>
</comment>
<comment type="function">
    <text evidence="1">With S5 and S12 plays an important role in translational accuracy.</text>
</comment>
<comment type="subunit">
    <text evidence="1">Part of the 30S ribosomal subunit. Contacts protein S5. The interaction surface between S4 and S5 is involved in control of translational fidelity.</text>
</comment>
<comment type="similarity">
    <text evidence="1">Belongs to the universal ribosomal protein uS4 family.</text>
</comment>
<name>RS4_STRPM</name>
<protein>
    <recommendedName>
        <fullName evidence="1">Small ribosomal subunit protein uS4</fullName>
    </recommendedName>
    <alternativeName>
        <fullName evidence="2">30S ribosomal protein S4</fullName>
    </alternativeName>
</protein>
<accession>Q48QN5</accession>